<sequence length="85" mass="9582">MEKLTVLILVAIVLLTIQVLGQSDRDKHPKRRPRQYATKRLSALMKGHRQCTGAGFECEETPECCPNLTCKCSGSPLCTRYRCKT</sequence>
<feature type="signal peptide" evidence="2">
    <location>
        <begin position="1"/>
        <end position="23"/>
    </location>
</feature>
<feature type="propeptide" id="PRO_0000392192" evidence="1">
    <location>
        <begin position="24"/>
        <end position="49"/>
    </location>
</feature>
<feature type="peptide" id="PRO_0000392193" description="Conotoxin Mi15b">
    <location>
        <begin position="50"/>
        <end position="85"/>
    </location>
</feature>
<feature type="modified residue" description="Pyrrolidone carboxylic acid" evidence="1">
    <location>
        <position position="50"/>
    </location>
</feature>
<evidence type="ECO:0000250" key="1"/>
<evidence type="ECO:0000255" key="2"/>
<evidence type="ECO:0000305" key="3"/>
<evidence type="ECO:0000305" key="4">
    <source ref="1"/>
</evidence>
<evidence type="ECO:0000312" key="5">
    <source>
        <dbReference type="EMBL" id="ACV07668.1"/>
    </source>
</evidence>
<accession>C8CK75</accession>
<name>CO2FB_CONMI</name>
<protein>
    <recommendedName>
        <fullName evidence="3">Conotoxin Mi15b</fullName>
    </recommendedName>
    <alternativeName>
        <fullName evidence="5">Conotoxin Ml15b</fullName>
    </alternativeName>
</protein>
<reference key="1">
    <citation type="submission" date="2009-07" db="EMBL/GenBank/DDBJ databases">
        <title>A novel class of conotoxin cDNAs with a distinctive cysteine arrangement.</title>
        <authorList>
            <person name="Wang L."/>
            <person name="Jiang X."/>
            <person name="Wu Y."/>
            <person name="Zhou M."/>
            <person name="Xu A."/>
        </authorList>
    </citation>
    <scope>NUCLEOTIDE SEQUENCE [MRNA]</scope>
    <source>
        <tissue>Venom duct</tissue>
    </source>
</reference>
<keyword id="KW-1015">Disulfide bond</keyword>
<keyword id="KW-0873">Pyrrolidone carboxylic acid</keyword>
<keyword id="KW-0964">Secreted</keyword>
<keyword id="KW-0732">Signal</keyword>
<keyword id="KW-0800">Toxin</keyword>
<dbReference type="EMBL" id="GQ414738">
    <property type="protein sequence ID" value="ACV07668.1"/>
    <property type="molecule type" value="mRNA"/>
</dbReference>
<dbReference type="SMR" id="C8CK75"/>
<dbReference type="ConoServer" id="3869">
    <property type="toxin name" value="Mi15b precursor"/>
</dbReference>
<dbReference type="GO" id="GO:0005576">
    <property type="term" value="C:extracellular region"/>
    <property type="evidence" value="ECO:0007669"/>
    <property type="project" value="UniProtKB-SubCell"/>
</dbReference>
<dbReference type="GO" id="GO:0008200">
    <property type="term" value="F:ion channel inhibitor activity"/>
    <property type="evidence" value="ECO:0007669"/>
    <property type="project" value="InterPro"/>
</dbReference>
<dbReference type="GO" id="GO:0090729">
    <property type="term" value="F:toxin activity"/>
    <property type="evidence" value="ECO:0007669"/>
    <property type="project" value="UniProtKB-KW"/>
</dbReference>
<dbReference type="InterPro" id="IPR004214">
    <property type="entry name" value="Conotoxin"/>
</dbReference>
<dbReference type="Pfam" id="PF02950">
    <property type="entry name" value="Conotoxin"/>
    <property type="match status" value="1"/>
</dbReference>
<comment type="subcellular location">
    <subcellularLocation>
        <location evidence="4">Secreted</location>
    </subcellularLocation>
</comment>
<comment type="tissue specificity">
    <text evidence="4">Expressed by the venom duct.</text>
</comment>
<comment type="domain">
    <text evidence="3">The cysteine framework is XV (C-C-CC-C-C-C-C).</text>
</comment>
<comment type="PTM">
    <text evidence="3">Contains 4 disulfide bonds.</text>
</comment>
<comment type="similarity">
    <text evidence="3">Belongs to the conotoxin O2 superfamily.</text>
</comment>
<proteinExistence type="inferred from homology"/>
<organism>
    <name type="scientific">Conus miles</name>
    <name type="common">Soldier cone</name>
    <name type="synonym">Mile cone</name>
    <dbReference type="NCBI Taxonomy" id="69564"/>
    <lineage>
        <taxon>Eukaryota</taxon>
        <taxon>Metazoa</taxon>
        <taxon>Spiralia</taxon>
        <taxon>Lophotrochozoa</taxon>
        <taxon>Mollusca</taxon>
        <taxon>Gastropoda</taxon>
        <taxon>Caenogastropoda</taxon>
        <taxon>Neogastropoda</taxon>
        <taxon>Conoidea</taxon>
        <taxon>Conidae</taxon>
        <taxon>Conus</taxon>
        <taxon>Rhizoconus</taxon>
    </lineage>
</organism>